<protein>
    <recommendedName>
        <fullName>Clc-like protein 5</fullName>
    </recommendedName>
</protein>
<comment type="subcellular location">
    <subcellularLocation>
        <location evidence="3">Membrane</location>
        <topology evidence="3">Multi-pass membrane protein</topology>
    </subcellularLocation>
</comment>
<comment type="developmental stage">
    <text evidence="2">Expressed throughout development.</text>
</comment>
<comment type="similarity">
    <text evidence="3">Belongs to the Clc family.</text>
</comment>
<feature type="chain" id="PRO_0000089853" description="Clc-like protein 5">
    <location>
        <begin position="1"/>
        <end position="281"/>
    </location>
</feature>
<feature type="transmembrane region" description="Helical" evidence="1">
    <location>
        <begin position="13"/>
        <end position="33"/>
    </location>
</feature>
<feature type="transmembrane region" description="Helical" evidence="1">
    <location>
        <begin position="104"/>
        <end position="124"/>
    </location>
</feature>
<feature type="transmembrane region" description="Helical" evidence="1">
    <location>
        <begin position="137"/>
        <end position="157"/>
    </location>
</feature>
<feature type="transmembrane region" description="Helical" evidence="1">
    <location>
        <begin position="184"/>
        <end position="204"/>
    </location>
</feature>
<name>CLC5_CAEEL</name>
<sequence length="281" mass="32136">MLVFQTKLQKYQLATLISSVISNFLIFFATITPAWQVADDLDADRYVQSGLWLYCPGQAQCWYIFSDSLINYYEKVDVCRFFLIGDCRKKLLRTPYFFGWHYAVLILNVISMICMSLCAAAVIFSYVKPARSRISVIMLDVFAGFASLLLCVSLIVFMVNAEMLESKYLIGIKNTYEKEYGYSYYLAGLAFVISVITVLFAALVSTYTFLFPEEVADSEYTLKMSNNQFAVRYNNDLPQPYQPPMSQLSMQIPSTEHGSYIAGAISPRGDFKSQTRHFYSY</sequence>
<evidence type="ECO:0000255" key="1"/>
<evidence type="ECO:0000269" key="2">
    <source>
    </source>
</evidence>
<evidence type="ECO:0000305" key="3"/>
<keyword id="KW-0472">Membrane</keyword>
<keyword id="KW-1185">Reference proteome</keyword>
<keyword id="KW-0812">Transmembrane</keyword>
<keyword id="KW-1133">Transmembrane helix</keyword>
<dbReference type="EMBL" id="AF252605">
    <property type="protein sequence ID" value="AAF67351.1"/>
    <property type="molecule type" value="mRNA"/>
</dbReference>
<dbReference type="EMBL" id="FO080255">
    <property type="protein sequence ID" value="CCD62385.1"/>
    <property type="molecule type" value="Genomic_DNA"/>
</dbReference>
<dbReference type="RefSeq" id="NP_509258.1">
    <property type="nucleotide sequence ID" value="NM_076857.7"/>
</dbReference>
<dbReference type="FunCoup" id="Q9NGJ7">
    <property type="interactions" value="17"/>
</dbReference>
<dbReference type="TCDB" id="1.H.2.2.1">
    <property type="family name" value="the invertebrate pmp22-claudin (claudin2) family"/>
</dbReference>
<dbReference type="PaxDb" id="6239-C01C10.4"/>
<dbReference type="PeptideAtlas" id="Q9NGJ7"/>
<dbReference type="EnsemblMetazoa" id="C01C10.4.1">
    <property type="protein sequence ID" value="C01C10.4.1"/>
    <property type="gene ID" value="WBGene00000526"/>
</dbReference>
<dbReference type="GeneID" id="181000"/>
<dbReference type="KEGG" id="cel:CELE_C01C10.4"/>
<dbReference type="UCSC" id="C01C10.4">
    <property type="organism name" value="c. elegans"/>
</dbReference>
<dbReference type="AGR" id="WB:WBGene00000526"/>
<dbReference type="CTD" id="181000"/>
<dbReference type="WormBase" id="C01C10.4">
    <property type="protein sequence ID" value="CE28882"/>
    <property type="gene ID" value="WBGene00000526"/>
    <property type="gene designation" value="clc-5"/>
</dbReference>
<dbReference type="eggNOG" id="ENOG502RXPB">
    <property type="taxonomic scope" value="Eukaryota"/>
</dbReference>
<dbReference type="HOGENOM" id="CLU_980832_0_0_1"/>
<dbReference type="InParanoid" id="Q9NGJ7"/>
<dbReference type="OMA" id="PCWYIFS"/>
<dbReference type="OrthoDB" id="5783969at2759"/>
<dbReference type="PhylomeDB" id="Q9NGJ7"/>
<dbReference type="PRO" id="PR:Q9NGJ7"/>
<dbReference type="Proteomes" id="UP000001940">
    <property type="component" value="Chromosome X"/>
</dbReference>
<dbReference type="Bgee" id="WBGene00000526">
    <property type="expression patterns" value="Expressed in embryo and 3 other cell types or tissues"/>
</dbReference>
<dbReference type="GO" id="GO:0016020">
    <property type="term" value="C:membrane"/>
    <property type="evidence" value="ECO:0000303"/>
    <property type="project" value="UniProtKB"/>
</dbReference>
<dbReference type="GO" id="GO:0005886">
    <property type="term" value="C:plasma membrane"/>
    <property type="evidence" value="ECO:0000318"/>
    <property type="project" value="GO_Central"/>
</dbReference>
<dbReference type="FunFam" id="1.20.140.150:FF:000042">
    <property type="entry name" value="Clc-like protein 2"/>
    <property type="match status" value="1"/>
</dbReference>
<dbReference type="Gene3D" id="1.20.140.150">
    <property type="match status" value="1"/>
</dbReference>
<dbReference type="InterPro" id="IPR010761">
    <property type="entry name" value="Clc_prot-like"/>
</dbReference>
<dbReference type="InterPro" id="IPR050579">
    <property type="entry name" value="PMP-22/EMP/MP20-like"/>
</dbReference>
<dbReference type="PANTHER" id="PTHR10671:SF96">
    <property type="entry name" value="CLC-LIKE PROTEIN 5"/>
    <property type="match status" value="1"/>
</dbReference>
<dbReference type="PANTHER" id="PTHR10671">
    <property type="entry name" value="EPITHELIAL MEMBRANE PROTEIN-RELATED"/>
    <property type="match status" value="1"/>
</dbReference>
<dbReference type="Pfam" id="PF07062">
    <property type="entry name" value="Clc-like"/>
    <property type="match status" value="1"/>
</dbReference>
<proteinExistence type="evidence at transcript level"/>
<accession>Q9NGJ7</accession>
<organism>
    <name type="scientific">Caenorhabditis elegans</name>
    <dbReference type="NCBI Taxonomy" id="6239"/>
    <lineage>
        <taxon>Eukaryota</taxon>
        <taxon>Metazoa</taxon>
        <taxon>Ecdysozoa</taxon>
        <taxon>Nematoda</taxon>
        <taxon>Chromadorea</taxon>
        <taxon>Rhabditida</taxon>
        <taxon>Rhabditina</taxon>
        <taxon>Rhabditomorpha</taxon>
        <taxon>Rhabditoidea</taxon>
        <taxon>Rhabditidae</taxon>
        <taxon>Peloderinae</taxon>
        <taxon>Caenorhabditis</taxon>
    </lineage>
</organism>
<reference key="1">
    <citation type="journal article" date="1999" name="Gene">
        <title>Identification and characterization of a new member of the gas3/PMP22 gene family in C. elegans.</title>
        <authorList>
            <person name="Agostoni E."/>
            <person name="Gobessi S."/>
            <person name="Brancolini C."/>
            <person name="Schneider C."/>
        </authorList>
    </citation>
    <scope>NUCLEOTIDE SEQUENCE [MRNA]</scope>
    <scope>DEVELOPMENTAL STAGE</scope>
    <source>
        <strain>Bristol N2</strain>
    </source>
</reference>
<reference key="2">
    <citation type="journal article" date="1998" name="Science">
        <title>Genome sequence of the nematode C. elegans: a platform for investigating biology.</title>
        <authorList>
            <consortium name="The C. elegans sequencing consortium"/>
        </authorList>
    </citation>
    <scope>NUCLEOTIDE SEQUENCE [LARGE SCALE GENOMIC DNA]</scope>
    <source>
        <strain>Bristol N2</strain>
    </source>
</reference>
<gene>
    <name type="primary">clc-5</name>
    <name type="ORF">C01C10.4</name>
</gene>